<reference key="1">
    <citation type="journal article" date="2004" name="Mol. Plant Microbe Interact.">
        <title>The genome sequence of the Gram-positive sugarcane pathogen Leifsonia xyli subsp. xyli.</title>
        <authorList>
            <person name="Monteiro-Vitorello C.B."/>
            <person name="Camargo L.E.A."/>
            <person name="Van Sluys M.A."/>
            <person name="Kitajima J.P."/>
            <person name="Truffi D."/>
            <person name="do Amaral A.M."/>
            <person name="Harakava R."/>
            <person name="de Oliveira J.C.F."/>
            <person name="Wood D."/>
            <person name="de Oliveira M.C."/>
            <person name="Miyaki C.Y."/>
            <person name="Takita M.A."/>
            <person name="da Silva A.C.R."/>
            <person name="Furlan L.R."/>
            <person name="Carraro D.M."/>
            <person name="Camarotte G."/>
            <person name="Almeida N.F. Jr."/>
            <person name="Carrer H."/>
            <person name="Coutinho L.L."/>
            <person name="El-Dorry H.A."/>
            <person name="Ferro M.I.T."/>
            <person name="Gagliardi P.R."/>
            <person name="Giglioti E."/>
            <person name="Goldman M.H.S."/>
            <person name="Goldman G.H."/>
            <person name="Kimura E.T."/>
            <person name="Ferro E.S."/>
            <person name="Kuramae E.E."/>
            <person name="Lemos E.G.M."/>
            <person name="Lemos M.V.F."/>
            <person name="Mauro S.M.Z."/>
            <person name="Machado M.A."/>
            <person name="Marino C.L."/>
            <person name="Menck C.F."/>
            <person name="Nunes L.R."/>
            <person name="Oliveira R.C."/>
            <person name="Pereira G.G."/>
            <person name="Siqueira W."/>
            <person name="de Souza A.A."/>
            <person name="Tsai S.M."/>
            <person name="Zanca A.S."/>
            <person name="Simpson A.J.G."/>
            <person name="Brumbley S.M."/>
            <person name="Setubal J.C."/>
        </authorList>
    </citation>
    <scope>NUCLEOTIDE SEQUENCE [LARGE SCALE GENOMIC DNA]</scope>
    <source>
        <strain>CTCB07</strain>
    </source>
</reference>
<protein>
    <recommendedName>
        <fullName evidence="1">Co-chaperonin GroES</fullName>
    </recommendedName>
    <alternativeName>
        <fullName evidence="1">10 kDa chaperonin</fullName>
    </alternativeName>
    <alternativeName>
        <fullName evidence="1">Chaperonin-10</fullName>
        <shortName evidence="1">Cpn10</shortName>
    </alternativeName>
</protein>
<comment type="function">
    <text evidence="1">Together with the chaperonin GroEL, plays an essential role in assisting protein folding. The GroEL-GroES system forms a nano-cage that allows encapsulation of the non-native substrate proteins and provides a physical environment optimized to promote and accelerate protein folding. GroES binds to the apical surface of the GroEL ring, thereby capping the opening of the GroEL channel.</text>
</comment>
<comment type="subunit">
    <text evidence="1">Heptamer of 7 subunits arranged in a ring. Interacts with the chaperonin GroEL.</text>
</comment>
<comment type="subcellular location">
    <subcellularLocation>
        <location evidence="1">Cytoplasm</location>
    </subcellularLocation>
</comment>
<comment type="similarity">
    <text evidence="1">Belongs to the GroES chaperonin family.</text>
</comment>
<feature type="chain" id="PRO_0000174777" description="Co-chaperonin GroES">
    <location>
        <begin position="1"/>
        <end position="98"/>
    </location>
</feature>
<accession>Q6AD41</accession>
<name>CH10_LEIXX</name>
<gene>
    <name evidence="1" type="primary">groES</name>
    <name evidence="1" type="synonym">groS</name>
    <name type="ordered locus">Lxx19880</name>
</gene>
<sequence length="98" mass="10466">MSVSIKPLEDRIVIKQVEAEQTTASGLVIPDTAKEKPQEGVVEAVGPGRIDDNGNRVPLDVAVGDKVIYSKYGGTEVKFGGQDYLVLSARDVLAVVVR</sequence>
<evidence type="ECO:0000255" key="1">
    <source>
        <dbReference type="HAMAP-Rule" id="MF_00580"/>
    </source>
</evidence>
<organism>
    <name type="scientific">Leifsonia xyli subsp. xyli (strain CTCB07)</name>
    <dbReference type="NCBI Taxonomy" id="281090"/>
    <lineage>
        <taxon>Bacteria</taxon>
        <taxon>Bacillati</taxon>
        <taxon>Actinomycetota</taxon>
        <taxon>Actinomycetes</taxon>
        <taxon>Micrococcales</taxon>
        <taxon>Microbacteriaceae</taxon>
        <taxon>Leifsonia</taxon>
    </lineage>
</organism>
<dbReference type="EMBL" id="AE016822">
    <property type="protein sequence ID" value="AAT89703.1"/>
    <property type="molecule type" value="Genomic_DNA"/>
</dbReference>
<dbReference type="RefSeq" id="WP_011186689.1">
    <property type="nucleotide sequence ID" value="NC_006087.1"/>
</dbReference>
<dbReference type="SMR" id="Q6AD41"/>
<dbReference type="STRING" id="281090.Lxx19880"/>
<dbReference type="KEGG" id="lxx:Lxx19880"/>
<dbReference type="eggNOG" id="COG0234">
    <property type="taxonomic scope" value="Bacteria"/>
</dbReference>
<dbReference type="HOGENOM" id="CLU_132825_2_0_11"/>
<dbReference type="Proteomes" id="UP000001306">
    <property type="component" value="Chromosome"/>
</dbReference>
<dbReference type="GO" id="GO:0005737">
    <property type="term" value="C:cytoplasm"/>
    <property type="evidence" value="ECO:0007669"/>
    <property type="project" value="UniProtKB-SubCell"/>
</dbReference>
<dbReference type="GO" id="GO:0005524">
    <property type="term" value="F:ATP binding"/>
    <property type="evidence" value="ECO:0007669"/>
    <property type="project" value="InterPro"/>
</dbReference>
<dbReference type="GO" id="GO:0046872">
    <property type="term" value="F:metal ion binding"/>
    <property type="evidence" value="ECO:0007669"/>
    <property type="project" value="TreeGrafter"/>
</dbReference>
<dbReference type="GO" id="GO:0044183">
    <property type="term" value="F:protein folding chaperone"/>
    <property type="evidence" value="ECO:0007669"/>
    <property type="project" value="InterPro"/>
</dbReference>
<dbReference type="GO" id="GO:0051087">
    <property type="term" value="F:protein-folding chaperone binding"/>
    <property type="evidence" value="ECO:0007669"/>
    <property type="project" value="TreeGrafter"/>
</dbReference>
<dbReference type="GO" id="GO:0051082">
    <property type="term" value="F:unfolded protein binding"/>
    <property type="evidence" value="ECO:0007669"/>
    <property type="project" value="TreeGrafter"/>
</dbReference>
<dbReference type="GO" id="GO:0051085">
    <property type="term" value="P:chaperone cofactor-dependent protein refolding"/>
    <property type="evidence" value="ECO:0007669"/>
    <property type="project" value="TreeGrafter"/>
</dbReference>
<dbReference type="CDD" id="cd00320">
    <property type="entry name" value="cpn10"/>
    <property type="match status" value="1"/>
</dbReference>
<dbReference type="FunFam" id="2.30.33.40:FF:000001">
    <property type="entry name" value="10 kDa chaperonin"/>
    <property type="match status" value="1"/>
</dbReference>
<dbReference type="Gene3D" id="2.30.33.40">
    <property type="entry name" value="GroES chaperonin"/>
    <property type="match status" value="1"/>
</dbReference>
<dbReference type="HAMAP" id="MF_00580">
    <property type="entry name" value="CH10"/>
    <property type="match status" value="1"/>
</dbReference>
<dbReference type="InterPro" id="IPR020818">
    <property type="entry name" value="Chaperonin_GroES"/>
</dbReference>
<dbReference type="InterPro" id="IPR037124">
    <property type="entry name" value="Chaperonin_GroES_sf"/>
</dbReference>
<dbReference type="InterPro" id="IPR018369">
    <property type="entry name" value="Chaprnonin_Cpn10_CS"/>
</dbReference>
<dbReference type="InterPro" id="IPR011032">
    <property type="entry name" value="GroES-like_sf"/>
</dbReference>
<dbReference type="NCBIfam" id="NF001527">
    <property type="entry name" value="PRK00364.1-2"/>
    <property type="match status" value="1"/>
</dbReference>
<dbReference type="NCBIfam" id="NF001530">
    <property type="entry name" value="PRK00364.1-6"/>
    <property type="match status" value="1"/>
</dbReference>
<dbReference type="NCBIfam" id="NF001531">
    <property type="entry name" value="PRK00364.2-2"/>
    <property type="match status" value="1"/>
</dbReference>
<dbReference type="NCBIfam" id="NF001533">
    <property type="entry name" value="PRK00364.2-4"/>
    <property type="match status" value="1"/>
</dbReference>
<dbReference type="NCBIfam" id="NF001534">
    <property type="entry name" value="PRK00364.2-5"/>
    <property type="match status" value="1"/>
</dbReference>
<dbReference type="PANTHER" id="PTHR10772">
    <property type="entry name" value="10 KDA HEAT SHOCK PROTEIN"/>
    <property type="match status" value="1"/>
</dbReference>
<dbReference type="PANTHER" id="PTHR10772:SF58">
    <property type="entry name" value="CO-CHAPERONIN GROES"/>
    <property type="match status" value="1"/>
</dbReference>
<dbReference type="Pfam" id="PF00166">
    <property type="entry name" value="Cpn10"/>
    <property type="match status" value="1"/>
</dbReference>
<dbReference type="PRINTS" id="PR00297">
    <property type="entry name" value="CHAPERONIN10"/>
</dbReference>
<dbReference type="SMART" id="SM00883">
    <property type="entry name" value="Cpn10"/>
    <property type="match status" value="1"/>
</dbReference>
<dbReference type="SUPFAM" id="SSF50129">
    <property type="entry name" value="GroES-like"/>
    <property type="match status" value="1"/>
</dbReference>
<dbReference type="PROSITE" id="PS00681">
    <property type="entry name" value="CHAPERONINS_CPN10"/>
    <property type="match status" value="1"/>
</dbReference>
<proteinExistence type="inferred from homology"/>
<keyword id="KW-0143">Chaperone</keyword>
<keyword id="KW-0963">Cytoplasm</keyword>
<keyword id="KW-1185">Reference proteome</keyword>